<organism>
    <name type="scientific">Staphylococcus carnosus (strain TM300)</name>
    <dbReference type="NCBI Taxonomy" id="396513"/>
    <lineage>
        <taxon>Bacteria</taxon>
        <taxon>Bacillati</taxon>
        <taxon>Bacillota</taxon>
        <taxon>Bacilli</taxon>
        <taxon>Bacillales</taxon>
        <taxon>Staphylococcaceae</taxon>
        <taxon>Staphylococcus</taxon>
    </lineage>
</organism>
<evidence type="ECO:0000255" key="1">
    <source>
        <dbReference type="HAMAP-Rule" id="MF_01615"/>
    </source>
</evidence>
<keyword id="KW-0315">Glutamine amidotransferase</keyword>
<keyword id="KW-0378">Hydrolase</keyword>
<keyword id="KW-0456">Lyase</keyword>
<keyword id="KW-0663">Pyridoxal phosphate</keyword>
<keyword id="KW-1185">Reference proteome</keyword>
<name>PDXT_STACT</name>
<reference key="1">
    <citation type="journal article" date="2009" name="Appl. Environ. Microbiol.">
        <title>Genome analysis of the meat starter culture bacterium Staphylococcus carnosus TM300.</title>
        <authorList>
            <person name="Rosenstein R."/>
            <person name="Nerz C."/>
            <person name="Biswas L."/>
            <person name="Resch A."/>
            <person name="Raddatz G."/>
            <person name="Schuster S.C."/>
            <person name="Goetz F."/>
        </authorList>
    </citation>
    <scope>NUCLEOTIDE SEQUENCE [LARGE SCALE GENOMIC DNA]</scope>
    <source>
        <strain>TM300</strain>
    </source>
</reference>
<comment type="function">
    <text evidence="1">Catalyzes the hydrolysis of glutamine to glutamate and ammonia as part of the biosynthesis of pyridoxal 5'-phosphate. The resulting ammonia molecule is channeled to the active site of PdxS.</text>
</comment>
<comment type="catalytic activity">
    <reaction evidence="1">
        <text>aldehydo-D-ribose 5-phosphate + D-glyceraldehyde 3-phosphate + L-glutamine = pyridoxal 5'-phosphate + L-glutamate + phosphate + 3 H2O + H(+)</text>
        <dbReference type="Rhea" id="RHEA:31507"/>
        <dbReference type="ChEBI" id="CHEBI:15377"/>
        <dbReference type="ChEBI" id="CHEBI:15378"/>
        <dbReference type="ChEBI" id="CHEBI:29985"/>
        <dbReference type="ChEBI" id="CHEBI:43474"/>
        <dbReference type="ChEBI" id="CHEBI:58273"/>
        <dbReference type="ChEBI" id="CHEBI:58359"/>
        <dbReference type="ChEBI" id="CHEBI:59776"/>
        <dbReference type="ChEBI" id="CHEBI:597326"/>
        <dbReference type="EC" id="4.3.3.6"/>
    </reaction>
</comment>
<comment type="catalytic activity">
    <reaction evidence="1">
        <text>L-glutamine + H2O = L-glutamate + NH4(+)</text>
        <dbReference type="Rhea" id="RHEA:15889"/>
        <dbReference type="ChEBI" id="CHEBI:15377"/>
        <dbReference type="ChEBI" id="CHEBI:28938"/>
        <dbReference type="ChEBI" id="CHEBI:29985"/>
        <dbReference type="ChEBI" id="CHEBI:58359"/>
        <dbReference type="EC" id="3.5.1.2"/>
    </reaction>
</comment>
<comment type="pathway">
    <text evidence="1">Cofactor biosynthesis; pyridoxal 5'-phosphate biosynthesis.</text>
</comment>
<comment type="subunit">
    <text evidence="1">In the presence of PdxS, forms a dodecamer of heterodimers. Only shows activity in the heterodimer.</text>
</comment>
<comment type="similarity">
    <text evidence="1">Belongs to the glutaminase PdxT/SNO family.</text>
</comment>
<proteinExistence type="inferred from homology"/>
<feature type="chain" id="PRO_1000185899" description="Pyridoxal 5'-phosphate synthase subunit PdxT">
    <location>
        <begin position="1"/>
        <end position="192"/>
    </location>
</feature>
<feature type="active site" description="Nucleophile" evidence="1">
    <location>
        <position position="75"/>
    </location>
</feature>
<feature type="active site" description="Charge relay system" evidence="1">
    <location>
        <position position="166"/>
    </location>
</feature>
<feature type="active site" description="Charge relay system" evidence="1">
    <location>
        <position position="168"/>
    </location>
</feature>
<feature type="binding site" evidence="1">
    <location>
        <begin position="46"/>
        <end position="48"/>
    </location>
    <ligand>
        <name>L-glutamine</name>
        <dbReference type="ChEBI" id="CHEBI:58359"/>
    </ligand>
</feature>
<feature type="binding site" evidence="1">
    <location>
        <position position="101"/>
    </location>
    <ligand>
        <name>L-glutamine</name>
        <dbReference type="ChEBI" id="CHEBI:58359"/>
    </ligand>
</feature>
<feature type="binding site" evidence="1">
    <location>
        <begin position="129"/>
        <end position="130"/>
    </location>
    <ligand>
        <name>L-glutamine</name>
        <dbReference type="ChEBI" id="CHEBI:58359"/>
    </ligand>
</feature>
<accession>B9DKX8</accession>
<protein>
    <recommendedName>
        <fullName evidence="1">Pyridoxal 5'-phosphate synthase subunit PdxT</fullName>
        <ecNumber evidence="1">4.3.3.6</ecNumber>
    </recommendedName>
    <alternativeName>
        <fullName evidence="1">Pdx2</fullName>
    </alternativeName>
    <alternativeName>
        <fullName evidence="1">Pyridoxal 5'-phosphate synthase glutaminase subunit</fullName>
        <ecNumber evidence="1">3.5.1.2</ecNumber>
    </alternativeName>
</protein>
<gene>
    <name evidence="1" type="primary">pdxT</name>
    <name type="ordered locus">Sca_0174</name>
</gene>
<dbReference type="EC" id="4.3.3.6" evidence="1"/>
<dbReference type="EC" id="3.5.1.2" evidence="1"/>
<dbReference type="EMBL" id="AM295250">
    <property type="protein sequence ID" value="CAL27087.1"/>
    <property type="molecule type" value="Genomic_DNA"/>
</dbReference>
<dbReference type="RefSeq" id="WP_012664202.1">
    <property type="nucleotide sequence ID" value="NC_012121.1"/>
</dbReference>
<dbReference type="SMR" id="B9DKX8"/>
<dbReference type="MEROPS" id="C26.A32"/>
<dbReference type="GeneID" id="93795103"/>
<dbReference type="KEGG" id="sca:SCA_0174"/>
<dbReference type="eggNOG" id="COG0311">
    <property type="taxonomic scope" value="Bacteria"/>
</dbReference>
<dbReference type="HOGENOM" id="CLU_069674_2_0_9"/>
<dbReference type="OrthoDB" id="9810320at2"/>
<dbReference type="BioCyc" id="SCAR396513:SCA_RS00905-MONOMER"/>
<dbReference type="UniPathway" id="UPA00245"/>
<dbReference type="Proteomes" id="UP000000444">
    <property type="component" value="Chromosome"/>
</dbReference>
<dbReference type="GO" id="GO:0005829">
    <property type="term" value="C:cytosol"/>
    <property type="evidence" value="ECO:0007669"/>
    <property type="project" value="TreeGrafter"/>
</dbReference>
<dbReference type="GO" id="GO:1903600">
    <property type="term" value="C:glutaminase complex"/>
    <property type="evidence" value="ECO:0007669"/>
    <property type="project" value="TreeGrafter"/>
</dbReference>
<dbReference type="GO" id="GO:0004359">
    <property type="term" value="F:glutaminase activity"/>
    <property type="evidence" value="ECO:0007669"/>
    <property type="project" value="UniProtKB-UniRule"/>
</dbReference>
<dbReference type="GO" id="GO:0036381">
    <property type="term" value="F:pyridoxal 5'-phosphate synthase (glutamine hydrolysing) activity"/>
    <property type="evidence" value="ECO:0007669"/>
    <property type="project" value="UniProtKB-UniRule"/>
</dbReference>
<dbReference type="GO" id="GO:0006543">
    <property type="term" value="P:glutamine catabolic process"/>
    <property type="evidence" value="ECO:0007669"/>
    <property type="project" value="UniProtKB-UniRule"/>
</dbReference>
<dbReference type="GO" id="GO:0042823">
    <property type="term" value="P:pyridoxal phosphate biosynthetic process"/>
    <property type="evidence" value="ECO:0007669"/>
    <property type="project" value="UniProtKB-UniRule"/>
</dbReference>
<dbReference type="GO" id="GO:0008614">
    <property type="term" value="P:pyridoxine metabolic process"/>
    <property type="evidence" value="ECO:0007669"/>
    <property type="project" value="TreeGrafter"/>
</dbReference>
<dbReference type="CDD" id="cd01749">
    <property type="entry name" value="GATase1_PB"/>
    <property type="match status" value="1"/>
</dbReference>
<dbReference type="FunFam" id="3.40.50.880:FF:000010">
    <property type="entry name" value="uncharacterized protein LOC100176842 isoform X2"/>
    <property type="match status" value="1"/>
</dbReference>
<dbReference type="Gene3D" id="3.40.50.880">
    <property type="match status" value="1"/>
</dbReference>
<dbReference type="HAMAP" id="MF_01615">
    <property type="entry name" value="PdxT"/>
    <property type="match status" value="1"/>
</dbReference>
<dbReference type="InterPro" id="IPR029062">
    <property type="entry name" value="Class_I_gatase-like"/>
</dbReference>
<dbReference type="InterPro" id="IPR002161">
    <property type="entry name" value="PdxT/SNO"/>
</dbReference>
<dbReference type="InterPro" id="IPR021196">
    <property type="entry name" value="PdxT/SNO_CS"/>
</dbReference>
<dbReference type="NCBIfam" id="TIGR03800">
    <property type="entry name" value="PLP_synth_Pdx2"/>
    <property type="match status" value="1"/>
</dbReference>
<dbReference type="PANTHER" id="PTHR31559">
    <property type="entry name" value="PYRIDOXAL 5'-PHOSPHATE SYNTHASE SUBUNIT SNO"/>
    <property type="match status" value="1"/>
</dbReference>
<dbReference type="PANTHER" id="PTHR31559:SF0">
    <property type="entry name" value="PYRIDOXAL 5'-PHOSPHATE SYNTHASE SUBUNIT SNO1-RELATED"/>
    <property type="match status" value="1"/>
</dbReference>
<dbReference type="Pfam" id="PF01174">
    <property type="entry name" value="SNO"/>
    <property type="match status" value="1"/>
</dbReference>
<dbReference type="PIRSF" id="PIRSF005639">
    <property type="entry name" value="Glut_amidoT_SNO"/>
    <property type="match status" value="1"/>
</dbReference>
<dbReference type="SUPFAM" id="SSF52317">
    <property type="entry name" value="Class I glutamine amidotransferase-like"/>
    <property type="match status" value="1"/>
</dbReference>
<dbReference type="PROSITE" id="PS01236">
    <property type="entry name" value="PDXT_SNO_1"/>
    <property type="match status" value="1"/>
</dbReference>
<dbReference type="PROSITE" id="PS51130">
    <property type="entry name" value="PDXT_SNO_2"/>
    <property type="match status" value="1"/>
</dbReference>
<sequence>MKIGVLALQGAVREHLRHIELSGHEGVSVKRVEQLEEIDGLILPGGESTTLRRLMNLYGFKEALVNSDLPMFGTCAGLIVLAQDIVGEEGYLQKLDITVERNSFGRQVDSFEAELDIKGIANDIEAVFIRAPHIEKVNSDNVEILSTVDDKIVAVKEGNYLGVSFHPELTDDYRVTQYFIDHIVAEHKHAAV</sequence>